<dbReference type="EC" id="2.7.11.21" evidence="2"/>
<dbReference type="EMBL" id="CR859233">
    <property type="protein sequence ID" value="CAH91413.1"/>
    <property type="molecule type" value="mRNA"/>
</dbReference>
<dbReference type="EMBL" id="NDHI03003363">
    <property type="protein sequence ID" value="PNJ83941.1"/>
    <property type="molecule type" value="Genomic_DNA"/>
</dbReference>
<dbReference type="EMBL" id="NDHI03003363">
    <property type="protein sequence ID" value="PNJ83944.1"/>
    <property type="molecule type" value="Genomic_DNA"/>
</dbReference>
<dbReference type="RefSeq" id="NP_001153257.1">
    <property type="nucleotide sequence ID" value="NM_001159785.1"/>
</dbReference>
<dbReference type="BMRB" id="Q5R9Z7"/>
<dbReference type="SMR" id="Q5R9Z7"/>
<dbReference type="FunCoup" id="Q5R9Z7">
    <property type="interactions" value="1709"/>
</dbReference>
<dbReference type="STRING" id="9601.ENSPPYP00000016820"/>
<dbReference type="Ensembl" id="ENSPPYT00000017501.2">
    <property type="protein sequence ID" value="ENSPPYP00000016820.1"/>
    <property type="gene ID" value="ENSPPYG00000015057.2"/>
</dbReference>
<dbReference type="GeneID" id="100294540"/>
<dbReference type="KEGG" id="pon:100294540"/>
<dbReference type="CTD" id="10733"/>
<dbReference type="eggNOG" id="KOG0575">
    <property type="taxonomic scope" value="Eukaryota"/>
</dbReference>
<dbReference type="GeneTree" id="ENSGT00940000156316"/>
<dbReference type="InParanoid" id="Q5R9Z7"/>
<dbReference type="OMA" id="NIVERCH"/>
<dbReference type="OrthoDB" id="10004143at2759"/>
<dbReference type="TreeFam" id="TF101090"/>
<dbReference type="Proteomes" id="UP000001595">
    <property type="component" value="Chromosome 4"/>
</dbReference>
<dbReference type="GO" id="GO:0005814">
    <property type="term" value="C:centriole"/>
    <property type="evidence" value="ECO:0000250"/>
    <property type="project" value="UniProtKB"/>
</dbReference>
<dbReference type="GO" id="GO:0005813">
    <property type="term" value="C:centrosome"/>
    <property type="evidence" value="ECO:0000250"/>
    <property type="project" value="UniProtKB"/>
</dbReference>
<dbReference type="GO" id="GO:0032154">
    <property type="term" value="C:cleavage furrow"/>
    <property type="evidence" value="ECO:0007669"/>
    <property type="project" value="UniProtKB-SubCell"/>
</dbReference>
<dbReference type="GO" id="GO:0005829">
    <property type="term" value="C:cytosol"/>
    <property type="evidence" value="ECO:0007669"/>
    <property type="project" value="Ensembl"/>
</dbReference>
<dbReference type="GO" id="GO:0098536">
    <property type="term" value="C:deuterosome"/>
    <property type="evidence" value="ECO:0000250"/>
    <property type="project" value="UniProtKB"/>
</dbReference>
<dbReference type="GO" id="GO:0005730">
    <property type="term" value="C:nucleolus"/>
    <property type="evidence" value="ECO:0000250"/>
    <property type="project" value="UniProtKB"/>
</dbReference>
<dbReference type="GO" id="GO:0120098">
    <property type="term" value="C:procentriole"/>
    <property type="evidence" value="ECO:0007669"/>
    <property type="project" value="Ensembl"/>
</dbReference>
<dbReference type="GO" id="GO:0120099">
    <property type="term" value="C:procentriole replication complex"/>
    <property type="evidence" value="ECO:0007669"/>
    <property type="project" value="Ensembl"/>
</dbReference>
<dbReference type="GO" id="GO:0001741">
    <property type="term" value="C:XY body"/>
    <property type="evidence" value="ECO:0007669"/>
    <property type="project" value="Ensembl"/>
</dbReference>
<dbReference type="GO" id="GO:0005524">
    <property type="term" value="F:ATP binding"/>
    <property type="evidence" value="ECO:0007669"/>
    <property type="project" value="UniProtKB-KW"/>
</dbReference>
<dbReference type="GO" id="GO:0042802">
    <property type="term" value="F:identical protein binding"/>
    <property type="evidence" value="ECO:0007669"/>
    <property type="project" value="Ensembl"/>
</dbReference>
<dbReference type="GO" id="GO:0106310">
    <property type="term" value="F:protein serine kinase activity"/>
    <property type="evidence" value="ECO:0007669"/>
    <property type="project" value="RHEA"/>
</dbReference>
<dbReference type="GO" id="GO:0004674">
    <property type="term" value="F:protein serine/threonine kinase activity"/>
    <property type="evidence" value="ECO:0000250"/>
    <property type="project" value="UniProtKB"/>
</dbReference>
<dbReference type="GO" id="GO:0007099">
    <property type="term" value="P:centriole replication"/>
    <property type="evidence" value="ECO:0000250"/>
    <property type="project" value="UniProtKB"/>
</dbReference>
<dbReference type="GO" id="GO:0060271">
    <property type="term" value="P:cilium assembly"/>
    <property type="evidence" value="ECO:0000250"/>
    <property type="project" value="UniProtKB"/>
</dbReference>
<dbReference type="GO" id="GO:0098535">
    <property type="term" value="P:de novo centriole assembly involved in multi-ciliated epithelial cell differentiation"/>
    <property type="evidence" value="ECO:0000250"/>
    <property type="project" value="UniProtKB"/>
</dbReference>
<dbReference type="GO" id="GO:0046601">
    <property type="term" value="P:positive regulation of centriole replication"/>
    <property type="evidence" value="ECO:0000250"/>
    <property type="project" value="UniProtKB"/>
</dbReference>
<dbReference type="GO" id="GO:0006468">
    <property type="term" value="P:protein phosphorylation"/>
    <property type="evidence" value="ECO:0000250"/>
    <property type="project" value="UniProtKB"/>
</dbReference>
<dbReference type="GO" id="GO:0060707">
    <property type="term" value="P:trophoblast giant cell differentiation"/>
    <property type="evidence" value="ECO:0000250"/>
    <property type="project" value="UniProtKB"/>
</dbReference>
<dbReference type="CDD" id="cd13114">
    <property type="entry name" value="POLO_box_Plk4_1"/>
    <property type="match status" value="1"/>
</dbReference>
<dbReference type="CDD" id="cd13115">
    <property type="entry name" value="POLO_box_Plk4_2"/>
    <property type="match status" value="1"/>
</dbReference>
<dbReference type="CDD" id="cd13116">
    <property type="entry name" value="POLO_box_Plk4_3"/>
    <property type="match status" value="1"/>
</dbReference>
<dbReference type="CDD" id="cd14186">
    <property type="entry name" value="STKc_PLK4"/>
    <property type="match status" value="1"/>
</dbReference>
<dbReference type="FunFam" id="3.30.200.20:FF:000221">
    <property type="entry name" value="Putative serine/threonine-protein kinase PLK4"/>
    <property type="match status" value="1"/>
</dbReference>
<dbReference type="FunFam" id="1.10.510.10:FF:000576">
    <property type="entry name" value="Serine/threonine-protein kinase PLK4"/>
    <property type="match status" value="1"/>
</dbReference>
<dbReference type="FunFam" id="2.40.50.930:FF:000001">
    <property type="entry name" value="Serine/threonine-protein kinase PLK4"/>
    <property type="match status" value="1"/>
</dbReference>
<dbReference type="FunFam" id="3.30.1120.130:FF:000001">
    <property type="entry name" value="serine/threonine-protein kinase PLK4 isoform X1"/>
    <property type="match status" value="1"/>
</dbReference>
<dbReference type="FunFam" id="3.30.1120.120:FF:000001">
    <property type="entry name" value="serine/threonine-protein kinase PLK4 isoform X2"/>
    <property type="match status" value="1"/>
</dbReference>
<dbReference type="Gene3D" id="2.40.50.930">
    <property type="match status" value="1"/>
</dbReference>
<dbReference type="Gene3D" id="3.30.1120.120">
    <property type="match status" value="1"/>
</dbReference>
<dbReference type="Gene3D" id="3.30.1120.130">
    <property type="match status" value="1"/>
</dbReference>
<dbReference type="Gene3D" id="3.30.200.20">
    <property type="entry name" value="Phosphorylase Kinase, domain 1"/>
    <property type="match status" value="1"/>
</dbReference>
<dbReference type="Gene3D" id="1.10.510.10">
    <property type="entry name" value="Transferase(Phosphotransferase) domain 1"/>
    <property type="match status" value="1"/>
</dbReference>
<dbReference type="InterPro" id="IPR011009">
    <property type="entry name" value="Kinase-like_dom_sf"/>
</dbReference>
<dbReference type="InterPro" id="IPR047108">
    <property type="entry name" value="Plk4-like_POLO_box_2_sf"/>
</dbReference>
<dbReference type="InterPro" id="IPR000959">
    <property type="entry name" value="POLO_box_dom"/>
</dbReference>
<dbReference type="InterPro" id="IPR033699">
    <property type="entry name" value="POLO_box_Plk4_1"/>
</dbReference>
<dbReference type="InterPro" id="IPR033698">
    <property type="entry name" value="POLO_box_Plk4_2"/>
</dbReference>
<dbReference type="InterPro" id="IPR033696">
    <property type="entry name" value="POLO_box_Plk4_C"/>
</dbReference>
<dbReference type="InterPro" id="IPR000719">
    <property type="entry name" value="Prot_kinase_dom"/>
</dbReference>
<dbReference type="InterPro" id="IPR017441">
    <property type="entry name" value="Protein_kinase_ATP_BS"/>
</dbReference>
<dbReference type="InterPro" id="IPR046437">
    <property type="entry name" value="Ser_Thr-PK_POLO_box_1_sf"/>
</dbReference>
<dbReference type="InterPro" id="IPR008266">
    <property type="entry name" value="Tyr_kinase_AS"/>
</dbReference>
<dbReference type="PANTHER" id="PTHR24345">
    <property type="entry name" value="SERINE/THREONINE-PROTEIN KINASE PLK"/>
    <property type="match status" value="1"/>
</dbReference>
<dbReference type="PANTHER" id="PTHR24345:SF89">
    <property type="entry name" value="SERINE_THREONINE-PROTEIN KINASE PLK4"/>
    <property type="match status" value="1"/>
</dbReference>
<dbReference type="Pfam" id="PF00069">
    <property type="entry name" value="Pkinase"/>
    <property type="match status" value="1"/>
</dbReference>
<dbReference type="Pfam" id="PF18190">
    <property type="entry name" value="Plk4_PB1"/>
    <property type="match status" value="1"/>
</dbReference>
<dbReference type="Pfam" id="PF18409">
    <property type="entry name" value="Plk4_PB2"/>
    <property type="match status" value="1"/>
</dbReference>
<dbReference type="SUPFAM" id="SSF82615">
    <property type="entry name" value="Polo-box domain"/>
    <property type="match status" value="1"/>
</dbReference>
<dbReference type="SUPFAM" id="SSF56112">
    <property type="entry name" value="Protein kinase-like (PK-like)"/>
    <property type="match status" value="1"/>
</dbReference>
<dbReference type="PROSITE" id="PS51984">
    <property type="entry name" value="CPB1"/>
    <property type="match status" value="1"/>
</dbReference>
<dbReference type="PROSITE" id="PS51985">
    <property type="entry name" value="CPB2"/>
    <property type="match status" value="1"/>
</dbReference>
<dbReference type="PROSITE" id="PS50078">
    <property type="entry name" value="POLO_BOX"/>
    <property type="match status" value="1"/>
</dbReference>
<dbReference type="PROSITE" id="PS00107">
    <property type="entry name" value="PROTEIN_KINASE_ATP"/>
    <property type="match status" value="1"/>
</dbReference>
<dbReference type="PROSITE" id="PS50011">
    <property type="entry name" value="PROTEIN_KINASE_DOM"/>
    <property type="match status" value="1"/>
</dbReference>
<keyword id="KW-0007">Acetylation</keyword>
<keyword id="KW-0067">ATP-binding</keyword>
<keyword id="KW-0963">Cytoplasm</keyword>
<keyword id="KW-0206">Cytoskeleton</keyword>
<keyword id="KW-0418">Kinase</keyword>
<keyword id="KW-0547">Nucleotide-binding</keyword>
<keyword id="KW-0539">Nucleus</keyword>
<keyword id="KW-0597">Phosphoprotein</keyword>
<keyword id="KW-1185">Reference proteome</keyword>
<keyword id="KW-0723">Serine/threonine-protein kinase</keyword>
<keyword id="KW-0808">Transferase</keyword>
<keyword id="KW-0832">Ubl conjugation</keyword>
<proteinExistence type="evidence at transcript level"/>
<feature type="chain" id="PRO_0000385280" description="Serine/threonine-protein kinase PLK4">
    <location>
        <begin position="1"/>
        <end position="970"/>
    </location>
</feature>
<feature type="domain" description="Protein kinase" evidence="5">
    <location>
        <begin position="12"/>
        <end position="265"/>
    </location>
</feature>
<feature type="domain" description="Cryptic POLO box 1 (CPB1)" evidence="6">
    <location>
        <begin position="586"/>
        <end position="699"/>
    </location>
</feature>
<feature type="domain" description="Cryptic POLO box 2 (CPB2)" evidence="7">
    <location>
        <begin position="700"/>
        <end position="813"/>
    </location>
</feature>
<feature type="domain" description="POLO box" evidence="4">
    <location>
        <begin position="886"/>
        <end position="964"/>
    </location>
</feature>
<feature type="region of interest" description="Disordered" evidence="8">
    <location>
        <begin position="324"/>
        <end position="373"/>
    </location>
</feature>
<feature type="region of interest" description="Disordered" evidence="8">
    <location>
        <begin position="498"/>
        <end position="540"/>
    </location>
</feature>
<feature type="region of interest" description="Disordered" evidence="8">
    <location>
        <begin position="808"/>
        <end position="829"/>
    </location>
</feature>
<feature type="compositionally biased region" description="Low complexity" evidence="8">
    <location>
        <begin position="327"/>
        <end position="343"/>
    </location>
</feature>
<feature type="compositionally biased region" description="Polar residues" evidence="8">
    <location>
        <begin position="344"/>
        <end position="356"/>
    </location>
</feature>
<feature type="compositionally biased region" description="Basic and acidic residues" evidence="8">
    <location>
        <begin position="360"/>
        <end position="369"/>
    </location>
</feature>
<feature type="compositionally biased region" description="Basic and acidic residues" evidence="8">
    <location>
        <begin position="504"/>
        <end position="515"/>
    </location>
</feature>
<feature type="compositionally biased region" description="Polar residues" evidence="8">
    <location>
        <begin position="530"/>
        <end position="540"/>
    </location>
</feature>
<feature type="active site" description="Proton acceptor" evidence="5">
    <location>
        <position position="136"/>
    </location>
</feature>
<feature type="binding site" evidence="5">
    <location>
        <begin position="18"/>
        <end position="26"/>
    </location>
    <ligand>
        <name>ATP</name>
        <dbReference type="ChEBI" id="CHEBI:30616"/>
    </ligand>
</feature>
<feature type="binding site" evidence="5">
    <location>
        <position position="41"/>
    </location>
    <ligand>
        <name>ATP</name>
        <dbReference type="ChEBI" id="CHEBI:30616"/>
    </ligand>
</feature>
<feature type="modified residue" description="N6-acetyllysine" evidence="2">
    <location>
        <position position="45"/>
    </location>
</feature>
<feature type="modified residue" description="N6-acetyllysine" evidence="2">
    <location>
        <position position="46"/>
    </location>
</feature>
<feature type="modified residue" description="Phosphoserine" evidence="2">
    <location>
        <position position="401"/>
    </location>
</feature>
<feature type="modified residue" description="Phosphoserine" evidence="2">
    <location>
        <position position="665"/>
    </location>
</feature>
<feature type="modified residue" description="Phosphoserine" evidence="2">
    <location>
        <position position="817"/>
    </location>
</feature>
<feature type="sequence conflict" description="In Ref. 1; CAH91413." evidence="9" ref="1">
    <original>I</original>
    <variation>V</variation>
    <location>
        <position position="556"/>
    </location>
</feature>
<feature type="sequence conflict" description="In Ref. 1; CAH91413." evidence="9" ref="1">
    <original>D</original>
    <variation>Y</variation>
    <location>
        <position position="871"/>
    </location>
</feature>
<feature type="sequence conflict" description="In Ref. 1; CAH91413." evidence="9" ref="1">
    <original>A</original>
    <variation>V</variation>
    <location>
        <position position="885"/>
    </location>
</feature>
<protein>
    <recommendedName>
        <fullName evidence="2">Serine/threonine-protein kinase PLK4</fullName>
        <ecNumber evidence="2">2.7.11.21</ecNumber>
    </recommendedName>
    <alternativeName>
        <fullName>Polo-like kinase 4</fullName>
        <shortName>PLK-4</shortName>
    </alternativeName>
    <alternativeName>
        <fullName>Serine/threonine-protein kinase Sak</fullName>
    </alternativeName>
</protein>
<sequence>MATCIGEKIEDFKVGNLLGKGSFAGVYRAESIHTGLEVAIKMIDKKAMYKAGMVQRVQNEVKIHCQLKHPSILELYNYFEDSNYVYLVLEMCHNGEMNRYLKNRVKPFSENEARHFMHQIITGMLYLHSHGILHRDLTLSNLLLTRNMNIKIADFGLATQLKMPHEKHYTLCGTPNYISPEIATRSAHGLESDVWSLGCMFYTLLIGRPPFDTDTVKNTLNKVVLADYEMPTFLSMEAKDLIHQLLRRNPADRLSLSSVLDHPFMSQNSSTKSKDLGTVEDSIDSGHATLSTAITASSSTSISGSLFDKRRLLIGQPLPNKMTVFPKNKSSSDFSSSGDGNSFYTQWGNQETSNSGRGRVIQDAEERPHSRYLRRAYSSDRSGTFNSPSQAKTYTMERCHSAEMLSMSKRSGGGENEERYSPTDNNANIFNFFKEKTSSSSGSFERPDNNQTLSNHLCPGKTPFPFADPTPQTETVQQWFGNLQINAHLRKTTEYDSISPTRDFQGHPDLQKDTSKNAWTDTKVKKNSDASDNAHSVKQPNTMKYMTALHSKPEIIQQECVFGSDPLSEQSKTRGMEPPLGYQNRTLRSITSPLVAHRLKPIRQKTKKAVVSILDSEEVCVELLKEYASQEYVKEVLQISSDGNMITIYYPNGGRGFPLADRPPSPTDNISRYSFDNLPEKYWRKYQYASRFVQLVRSKSPKITYFTRYAKCILMENSPGADFEVWFYDGVKIHKTEDFIQVIEKTGKSYTLKSESEVNSLKEEIKMYMDHANEGHRICLALESIISEEERKTRSAPFFPIIIGRKPGSTSSPKALSPPPSVDSNYPTRDRASFNRMVMHSAASPTQAPILNPSMVTNEGLGLTTTASGTDISSNSLKDCLPKSAQLLKSVFVKNVGWATQLTSGAVWVQFNDGSQLVVQAGVSSISYTSPNGQTTRYGENEKLPEYIKQKLQCLSSILLMFSNPTPNFH</sequence>
<evidence type="ECO:0000250" key="1"/>
<evidence type="ECO:0000250" key="2">
    <source>
        <dbReference type="UniProtKB" id="O00444"/>
    </source>
</evidence>
<evidence type="ECO:0000250" key="3">
    <source>
        <dbReference type="UniProtKB" id="Q64702"/>
    </source>
</evidence>
<evidence type="ECO:0000255" key="4">
    <source>
        <dbReference type="PROSITE-ProRule" id="PRU00154"/>
    </source>
</evidence>
<evidence type="ECO:0000255" key="5">
    <source>
        <dbReference type="PROSITE-ProRule" id="PRU00159"/>
    </source>
</evidence>
<evidence type="ECO:0000255" key="6">
    <source>
        <dbReference type="PROSITE-ProRule" id="PRU01328"/>
    </source>
</evidence>
<evidence type="ECO:0000255" key="7">
    <source>
        <dbReference type="PROSITE-ProRule" id="PRU01329"/>
    </source>
</evidence>
<evidence type="ECO:0000256" key="8">
    <source>
        <dbReference type="SAM" id="MobiDB-lite"/>
    </source>
</evidence>
<evidence type="ECO:0000305" key="9"/>
<comment type="function">
    <text evidence="2 3">Serine/threonine-protein kinase that plays a central role in centriole duplication. Able to trigger procentriole formation on the surface of the parental centriole cylinder, leading to the recruitment of centriole biogenesis proteins such as SASS6, CPAP, CCP110, CEP135 and gamma-tubulin. When overexpressed, it is able to induce centrosome amplification through the simultaneous generation of multiple procentrioles adjoining each parental centriole during S phase. Phosphorylates 'Ser-151' of FBXW5 during the G1/S transition, leading to inhibit FBXW5 ability to ubiquitinate SASS6. Its central role in centriole replication suggests a possible role in tumorigenesis, centrosome aberrations being frequently observed in tumors. Also involved in deuterosome-mediated centriole amplification in multiciliated that can generate more than 100 centrioles. Also involved in trophoblast differentiation by phosphorylating HAND1, leading to disrupt the interaction between HAND1 and MDFIC and activate HAND1. Phosphorylates CDC25C and CHEK2. Required for the recruitment of STIL to the centriole and for STIL-mediated centriole amplification (By similarity). Phosphorylates CEP131 and PCM1 which is essential for proper organization and integrity of centriolar satellites (By similarity).</text>
</comment>
<comment type="catalytic activity">
    <reaction evidence="2">
        <text>L-seryl-[protein] + ATP = O-phospho-L-seryl-[protein] + ADP + H(+)</text>
        <dbReference type="Rhea" id="RHEA:17989"/>
        <dbReference type="Rhea" id="RHEA-COMP:9863"/>
        <dbReference type="Rhea" id="RHEA-COMP:11604"/>
        <dbReference type="ChEBI" id="CHEBI:15378"/>
        <dbReference type="ChEBI" id="CHEBI:29999"/>
        <dbReference type="ChEBI" id="CHEBI:30616"/>
        <dbReference type="ChEBI" id="CHEBI:83421"/>
        <dbReference type="ChEBI" id="CHEBI:456216"/>
        <dbReference type="EC" id="2.7.11.21"/>
    </reaction>
</comment>
<comment type="catalytic activity">
    <reaction evidence="2">
        <text>L-threonyl-[protein] + ATP = O-phospho-L-threonyl-[protein] + ADP + H(+)</text>
        <dbReference type="Rhea" id="RHEA:46608"/>
        <dbReference type="Rhea" id="RHEA-COMP:11060"/>
        <dbReference type="Rhea" id="RHEA-COMP:11605"/>
        <dbReference type="ChEBI" id="CHEBI:15378"/>
        <dbReference type="ChEBI" id="CHEBI:30013"/>
        <dbReference type="ChEBI" id="CHEBI:30616"/>
        <dbReference type="ChEBI" id="CHEBI:61977"/>
        <dbReference type="ChEBI" id="CHEBI:456216"/>
        <dbReference type="EC" id="2.7.11.21"/>
    </reaction>
</comment>
<comment type="subunit">
    <text evidence="2 3">Homodimer (By similarity). Interacts with CEP152 (via N-terminus). Interacts with CEP78; this interaction may be important for proper PLK4 localization to the centriole and PLK4-induced overduplication of centrioles. Interacts with CEP131. Interacts simultaneously with TENT5C and CEP192. Interacts with TENT5C; this interaction leads to the TENT5C recruitment in the centrosome (By similarity). Interacts with CEP85; this interaction may be important in cell migration and centriole assembly (By similarity).</text>
</comment>
<comment type="subcellular location">
    <subcellularLocation>
        <location evidence="2">Cytoplasm</location>
        <location evidence="2">Cytoskeleton</location>
        <location evidence="2">Microtubule organizing center</location>
        <location evidence="2">Centrosome</location>
        <location evidence="2">Centriole</location>
    </subcellularLocation>
    <subcellularLocation>
        <location evidence="3">Nucleus</location>
        <location evidence="3">Nucleolus</location>
    </subcellularLocation>
    <subcellularLocation>
        <location evidence="3">Cleavage furrow</location>
    </subcellularLocation>
    <subcellularLocation>
        <location evidence="2">Cytoplasm</location>
        <location evidence="2">Cytoskeleton</location>
        <location evidence="2">Microtubule organizing center</location>
        <location evidence="2">Centrosome</location>
    </subcellularLocation>
    <text evidence="2 3">Associates with centrioles throughout the cell cycle. Component of the deuterosome, a structure that promotes de novo centriole amplification in multiciliated cells that can generate more than 100 centrioles (By similarity).</text>
</comment>
<comment type="domain">
    <text evidence="2">Cryptic POLO box 1 (CPB1) and Cryptic POLO box 2 (CPB2) domains can simultaneously bind to both TENT5C and CEP192.</text>
</comment>
<comment type="PTM">
    <text evidence="2 3">Ubiquitinated; leading to its degradation by the proteasome (By similarity). Deubiquitinated by USP54; leading to PLK4 stabilization (By similarity).</text>
</comment>
<comment type="PTM">
    <text evidence="1">Tyrosine-phosphorylated by TEC.</text>
</comment>
<comment type="PTM">
    <text evidence="2">Acetylation by KAT2A and KAT2B impairs kinase activity by shifting the kinase to an inactive conformation.</text>
</comment>
<comment type="similarity">
    <text evidence="5 6 7">Belongs to the protein kinase superfamily. Ser/Thr protein kinase family. CDC5/Polo subfamily.</text>
</comment>
<gene>
    <name evidence="2" type="primary">PLK4</name>
    <name type="synonym">SAK</name>
</gene>
<name>PLK4_PONAB</name>
<reference key="1">
    <citation type="submission" date="2004-11" db="EMBL/GenBank/DDBJ databases">
        <authorList>
            <consortium name="The German cDNA consortium"/>
        </authorList>
    </citation>
    <scope>NUCLEOTIDE SEQUENCE [LARGE SCALE MRNA]</scope>
    <source>
        <tissue>Brain cortex</tissue>
    </source>
</reference>
<reference key="2">
    <citation type="submission" date="2008-02" db="EMBL/GenBank/DDBJ databases">
        <title>A 6x draft sequence assembly of the Pongo pygmaeus abelii genome.</title>
        <authorList>
            <person name="Wilson R.K."/>
            <person name="Mardis E."/>
        </authorList>
    </citation>
    <scope>NUCLEOTIDE SEQUENCE [LARGE SCALE GENOMIC DNA]</scope>
</reference>
<reference key="3">
    <citation type="submission" date="2017-12" db="EMBL/GenBank/DDBJ databases">
        <title>High-resolution comparative analysis of great ape genomes.</title>
        <authorList>
            <person name="Pollen A."/>
            <person name="Hastie A."/>
            <person name="Hormozdiari F."/>
            <person name="Dougherty M."/>
            <person name="Liu R."/>
            <person name="Chaisson M."/>
            <person name="Hoppe E."/>
            <person name="Hill C."/>
            <person name="Pang A."/>
            <person name="Hillier L."/>
            <person name="Baker C."/>
            <person name="Armstrong J."/>
            <person name="Shendure J."/>
            <person name="Paten B."/>
            <person name="Wilson R."/>
            <person name="Chao H."/>
            <person name="Schneider V."/>
            <person name="Ventura M."/>
            <person name="Kronenberg Z."/>
            <person name="Murali S."/>
            <person name="Gordon D."/>
            <person name="Cantsilieris S."/>
            <person name="Munson K."/>
            <person name="Nelson B."/>
            <person name="Raja A."/>
            <person name="Underwood J."/>
            <person name="Diekhans M."/>
            <person name="Fiddes I."/>
            <person name="Haussler D."/>
            <person name="Eichler E."/>
        </authorList>
    </citation>
    <scope>NUCLEOTIDE SEQUENCE [LARGE SCALE GENOMIC DNA]</scope>
</reference>
<accession>Q5R9Z7</accession>
<accession>A0A2J8XPI8</accession>
<accession>A0A6D2W4N1</accession>
<accession>H2PEA6</accession>
<organism>
    <name type="scientific">Pongo abelii</name>
    <name type="common">Sumatran orangutan</name>
    <name type="synonym">Pongo pygmaeus abelii</name>
    <dbReference type="NCBI Taxonomy" id="9601"/>
    <lineage>
        <taxon>Eukaryota</taxon>
        <taxon>Metazoa</taxon>
        <taxon>Chordata</taxon>
        <taxon>Craniata</taxon>
        <taxon>Vertebrata</taxon>
        <taxon>Euteleostomi</taxon>
        <taxon>Mammalia</taxon>
        <taxon>Eutheria</taxon>
        <taxon>Euarchontoglires</taxon>
        <taxon>Primates</taxon>
        <taxon>Haplorrhini</taxon>
        <taxon>Catarrhini</taxon>
        <taxon>Hominidae</taxon>
        <taxon>Pongo</taxon>
    </lineage>
</organism>